<gene>
    <name evidence="4" type="primary">drmA</name>
    <name evidence="6" type="ordered locus">BaLi_c08320</name>
</gene>
<name>DRMA_BACP9</name>
<evidence type="ECO:0000255" key="1">
    <source>
        <dbReference type="PROSITE-ProRule" id="PRU00542"/>
    </source>
</evidence>
<evidence type="ECO:0000256" key="2">
    <source>
        <dbReference type="SAM" id="MobiDB-lite"/>
    </source>
</evidence>
<evidence type="ECO:0000269" key="3">
    <source>
    </source>
</evidence>
<evidence type="ECO:0000303" key="4">
    <source>
    </source>
</evidence>
<evidence type="ECO:0000305" key="5"/>
<evidence type="ECO:0000312" key="6">
    <source>
        <dbReference type="EMBL" id="AGN35227.1"/>
    </source>
</evidence>
<accession>P0DW05</accession>
<comment type="function">
    <text evidence="3">Component of antiviral defense system DISARM (defense island system associated with restriction-modification), composed of DrmE, DrmA, DrmB, DrmC and DrmMII. DISARM is probably a multi-gene restriction module, this subunit is probably a helicase. Expression of DISARM in B.subtilis (strain BEST7003) confers resistance to phages Nf, phi29, phi105, phi3T, SPO1, SPR and SPP1. Protection is over 10(7)-fold against phi3T, 10(4)-10(5)-fold against Nf, phi29, phi105 and SPR, 100-fold against SPO1 and 10-fold against SPP1. DISARM does not interfere with phage adsorption, but instead interferes with (phi3T) DNA replication early in its cycle, preventing replication, circularization and lysogeny and probably causes phage DNA degradation (DNA is degraded in SPP1-infected cells).</text>
</comment>
<comment type="subcellular location">
    <subcellularLocation>
        <location evidence="5">Cytoplasm</location>
    </subcellularLocation>
</comment>
<comment type="disruption phenotype">
    <text evidence="3">When this gene is missing the DISARM system does not confer Nf, phi3T or SPO1 resistance in B.subtilis.</text>
</comment>
<comment type="similarity">
    <text evidence="5">Belongs to the helicase family.</text>
</comment>
<sequence>MSKAEREMYKKVRRIMVSDLKRDLIGPAHDESDVIYEAPSQAYITGILYPLESEVETEKSLEDVQFADVYDEPESGMEEDVEQQRNSELEQEAEEEKITPNKKFKHQNSLGIRCYVRETTDHIRASIAWGRYTSSKKFDSERKREVILWTRQIECFEEYISLSSFDQNIDIPITQEVSLVVSKKKLSGTDVFLVSVFLVNKRVDKNSNNAMFQCELTLTHEEGKGIFLCENEARKDKNDFSEFLYRNKPVFAKGFGCAVTWKAESSNYASELKSAFIPEHEVESMSTDLPYDENYGELPKGYFSIKQFAEADDQRETIDKLNNLANRYESWINKLPVDKVANKEATERVIKDCQATLTRIRRGIQLLANEENNKAFVAFKFMNTVMHTQDAMKRYSRNNKTTTLETEIRKENLEWRPFQLAFILLNLEGLVDLKSKDRKIVDLLWFPTGGGKTEAYLGICAFLLGYRRLFASTSSAYERDGGVTILLRYTLRLLTTQQRDRLMRMISACEYTRQKTNAFGQSEFSVGFWVGAQVTVNKLDDLTENEYYLDRDKVLKEYEKIEKQVIECPCCGTKGLEYKFLPSRDTKTKKTGIKIFCTNESCFFSKTHIPVYLVDEEIYRKLPTVVISTVDKFARLPWDEKTAALFGKVNRFCERCGYIAEGEKHEKSHRNPKASVHDVKPFYPPELIIQDELHLITGPLGTVYGGYETVIEELSTAHEGEDYLKPKYIAATATIKNAEVQVEKVFGRKLTQQFPPPGLKVEDSFFARERNLDEFPFRLYAGVCVSGHSMKTVLLRIYAVLLQTTEHLLEDEELSKYIDPYRTLVGYFNSIRELGGAVRLLEDDIKKRIQTLQKKYKYSKQRYISRKPELTSRVPSSRIPKVLEQLEKEIGNEELDVVLATNMISVGMDVDRLGLMVITGQPKQTSEYIQSSSRVGRSKPGLVITVYNPYRPRDMSHYQNFKGYHQRLYHFVEGTTATPYASRARDRFLHAIAVALLRLSYPELAKNLDAKNIKDMDLNYLKDVVKKRVSTVEYRNVSDTMEHLQHFLDEWISRAVSEDNLQYYFNPKTRSARIGNQSRLLARFSEEKKHGGKPTLDSMRQVEGTSSLYIYEGWNSSEE</sequence>
<proteinExistence type="inferred from homology"/>
<keyword id="KW-0051">Antiviral defense</keyword>
<keyword id="KW-0067">ATP-binding</keyword>
<keyword id="KW-0963">Cytoplasm</keyword>
<keyword id="KW-0347">Helicase</keyword>
<keyword id="KW-0378">Hydrolase</keyword>
<keyword id="KW-0547">Nucleotide-binding</keyword>
<keyword id="KW-0680">Restriction system</keyword>
<reference key="1">
    <citation type="journal article" date="2013" name="Genome Announc.">
        <title>First Insights into the Completely Annotated Genome Sequence of Bacillus licheniformis Strain 9945A.</title>
        <authorList>
            <person name="Rachinger M."/>
            <person name="Volland S."/>
            <person name="Meinhardt F."/>
            <person name="Daniel R."/>
            <person name="Liesegang H."/>
        </authorList>
    </citation>
    <scope>NUCLEOTIDE SEQUENCE [LARGE SCALE GENOMIC DNA]</scope>
    <source>
        <strain>ATCC 9945a / NCIMB 11709 / CD-2</strain>
    </source>
</reference>
<reference key="2">
    <citation type="journal article" date="2018" name="Nat. Microbiol.">
        <title>DISARM is a widespread bacterial defence system with broad anti-phage activities.</title>
        <authorList>
            <person name="Ofir G."/>
            <person name="Melamed S."/>
            <person name="Sberro H."/>
            <person name="Mukamel Z."/>
            <person name="Silverman S."/>
            <person name="Yaakov G."/>
            <person name="Doron S."/>
            <person name="Sorek R."/>
        </authorList>
    </citation>
    <scope>FUNCTION</scope>
    <scope>DISRUPTION PHENOTYPE</scope>
    <scope>EXPRESSION IN B.SUBTILIS</scope>
    <source>
        <strain>ATCC 9945a / NCIMB 11709 / CD-2</strain>
    </source>
</reference>
<dbReference type="EMBL" id="CP005965">
    <property type="protein sequence ID" value="AGN35227.1"/>
    <property type="molecule type" value="Genomic_DNA"/>
</dbReference>
<dbReference type="RefSeq" id="WP_020450479.1">
    <property type="nucleotide sequence ID" value="NC_021362.1"/>
</dbReference>
<dbReference type="SMR" id="P0DW05"/>
<dbReference type="KEGG" id="blh:BaLi_c08320"/>
<dbReference type="GO" id="GO:0005737">
    <property type="term" value="C:cytoplasm"/>
    <property type="evidence" value="ECO:0007669"/>
    <property type="project" value="UniProtKB-SubCell"/>
</dbReference>
<dbReference type="GO" id="GO:0005524">
    <property type="term" value="F:ATP binding"/>
    <property type="evidence" value="ECO:0007669"/>
    <property type="project" value="UniProtKB-KW"/>
</dbReference>
<dbReference type="GO" id="GO:0004386">
    <property type="term" value="F:helicase activity"/>
    <property type="evidence" value="ECO:0007669"/>
    <property type="project" value="UniProtKB-KW"/>
</dbReference>
<dbReference type="GO" id="GO:0016787">
    <property type="term" value="F:hydrolase activity"/>
    <property type="evidence" value="ECO:0007669"/>
    <property type="project" value="UniProtKB-KW"/>
</dbReference>
<dbReference type="GO" id="GO:0051607">
    <property type="term" value="P:defense response to virus"/>
    <property type="evidence" value="ECO:0007669"/>
    <property type="project" value="UniProtKB-KW"/>
</dbReference>
<dbReference type="GO" id="GO:0009307">
    <property type="term" value="P:DNA restriction-modification system"/>
    <property type="evidence" value="ECO:0007669"/>
    <property type="project" value="UniProtKB-KW"/>
</dbReference>
<dbReference type="Gene3D" id="3.40.50.300">
    <property type="entry name" value="P-loop containing nucleotide triphosphate hydrolases"/>
    <property type="match status" value="2"/>
</dbReference>
<dbReference type="InterPro" id="IPR001650">
    <property type="entry name" value="Helicase_C-like"/>
</dbReference>
<dbReference type="InterPro" id="IPR027417">
    <property type="entry name" value="P-loop_NTPase"/>
</dbReference>
<dbReference type="NCBIfam" id="NF038325">
    <property type="entry name" value="DISARM_DrmAS"/>
    <property type="match status" value="1"/>
</dbReference>
<dbReference type="Pfam" id="PF00271">
    <property type="entry name" value="Helicase_C"/>
    <property type="match status" value="1"/>
</dbReference>
<dbReference type="SMART" id="SM00490">
    <property type="entry name" value="HELICc"/>
    <property type="match status" value="1"/>
</dbReference>
<dbReference type="SUPFAM" id="SSF52540">
    <property type="entry name" value="P-loop containing nucleoside triphosphate hydrolases"/>
    <property type="match status" value="2"/>
</dbReference>
<dbReference type="PROSITE" id="PS51194">
    <property type="entry name" value="HELICASE_CTER"/>
    <property type="match status" value="1"/>
</dbReference>
<organism>
    <name type="scientific">Bacillus paralicheniformis (strain ATCC 9945a / NCIMB 11709 / CD-2)</name>
    <dbReference type="NCBI Taxonomy" id="766760"/>
    <lineage>
        <taxon>Bacteria</taxon>
        <taxon>Bacillati</taxon>
        <taxon>Bacillota</taxon>
        <taxon>Bacilli</taxon>
        <taxon>Bacillales</taxon>
        <taxon>Bacillaceae</taxon>
        <taxon>Bacillus</taxon>
    </lineage>
</organism>
<feature type="chain" id="PRO_0000456311" description="DISARM protein DrmA">
    <location>
        <begin position="1"/>
        <end position="1119"/>
    </location>
</feature>
<feature type="domain" description="Helicase C-terminal" evidence="1">
    <location>
        <begin position="813"/>
        <end position="986"/>
    </location>
</feature>
<feature type="region of interest" description="Disordered" evidence="2">
    <location>
        <begin position="73"/>
        <end position="95"/>
    </location>
</feature>
<protein>
    <recommendedName>
        <fullName evidence="4">DISARM protein DrmA</fullName>
    </recommendedName>
    <alternativeName>
        <fullName evidence="5">Probable ATP-dependent helicase DrmA</fullName>
    </alternativeName>
</protein>